<sequence length="325" mass="37543">MKKKEIIILCGPTASGKSYLGHEFAKAYNGEIINIDSMQVYKETPIITASPSQIYKTEIPYHLYNFLSITEDFSVIKYLKLAAKKIKEIISRGKLPILIGGTGLYINSLVFGYNNIPDITEDLQKQARELHSKIGNIELWNKLEKLDPLAASKINQNDTQRLIRAYEVFKQSGKSIFCFHTLPKEQILSEFNFKIIFLNPERKFLYKTCEQRLQKIFKEGSIDEIALIKKQLIPQDYLNLKAVGVKEILAYLDGNLTLDDALSATQIRTRRYAKRQVTWFKNQIKDKITLKYSNQEECTKILEIFPHLLIERNLKETQNTAPQCI</sequence>
<gene>
    <name evidence="1" type="primary">miaA</name>
    <name type="ordered locus">A1E_02955</name>
</gene>
<feature type="chain" id="PRO_1000020652" description="tRNA dimethylallyltransferase">
    <location>
        <begin position="1"/>
        <end position="325"/>
    </location>
</feature>
<feature type="region of interest" description="Interaction with substrate tRNA" evidence="1">
    <location>
        <begin position="36"/>
        <end position="39"/>
    </location>
</feature>
<feature type="region of interest" description="Interaction with substrate tRNA" evidence="1">
    <location>
        <begin position="160"/>
        <end position="164"/>
    </location>
</feature>
<feature type="binding site" evidence="1">
    <location>
        <begin position="11"/>
        <end position="18"/>
    </location>
    <ligand>
        <name>ATP</name>
        <dbReference type="ChEBI" id="CHEBI:30616"/>
    </ligand>
</feature>
<feature type="binding site" evidence="1">
    <location>
        <begin position="13"/>
        <end position="18"/>
    </location>
    <ligand>
        <name>substrate</name>
    </ligand>
</feature>
<feature type="site" description="Interaction with substrate tRNA" evidence="1">
    <location>
        <position position="102"/>
    </location>
</feature>
<keyword id="KW-0067">ATP-binding</keyword>
<keyword id="KW-0460">Magnesium</keyword>
<keyword id="KW-0547">Nucleotide-binding</keyword>
<keyword id="KW-0808">Transferase</keyword>
<keyword id="KW-0819">tRNA processing</keyword>
<proteinExistence type="inferred from homology"/>
<comment type="function">
    <text evidence="1">Catalyzes the transfer of a dimethylallyl group onto the adenine at position 37 in tRNAs that read codons beginning with uridine, leading to the formation of N6-(dimethylallyl)adenosine (i(6)A).</text>
</comment>
<comment type="catalytic activity">
    <reaction evidence="1">
        <text>adenosine(37) in tRNA + dimethylallyl diphosphate = N(6)-dimethylallyladenosine(37) in tRNA + diphosphate</text>
        <dbReference type="Rhea" id="RHEA:26482"/>
        <dbReference type="Rhea" id="RHEA-COMP:10162"/>
        <dbReference type="Rhea" id="RHEA-COMP:10375"/>
        <dbReference type="ChEBI" id="CHEBI:33019"/>
        <dbReference type="ChEBI" id="CHEBI:57623"/>
        <dbReference type="ChEBI" id="CHEBI:74411"/>
        <dbReference type="ChEBI" id="CHEBI:74415"/>
        <dbReference type="EC" id="2.5.1.75"/>
    </reaction>
</comment>
<comment type="cofactor">
    <cofactor evidence="1">
        <name>Mg(2+)</name>
        <dbReference type="ChEBI" id="CHEBI:18420"/>
    </cofactor>
</comment>
<comment type="subunit">
    <text evidence="1">Monomer.</text>
</comment>
<comment type="similarity">
    <text evidence="1">Belongs to the IPP transferase family.</text>
</comment>
<organism>
    <name type="scientific">Rickettsia canadensis (strain McKiel)</name>
    <dbReference type="NCBI Taxonomy" id="293613"/>
    <lineage>
        <taxon>Bacteria</taxon>
        <taxon>Pseudomonadati</taxon>
        <taxon>Pseudomonadota</taxon>
        <taxon>Alphaproteobacteria</taxon>
        <taxon>Rickettsiales</taxon>
        <taxon>Rickettsiaceae</taxon>
        <taxon>Rickettsieae</taxon>
        <taxon>Rickettsia</taxon>
        <taxon>belli group</taxon>
    </lineage>
</organism>
<protein>
    <recommendedName>
        <fullName evidence="1">tRNA dimethylallyltransferase</fullName>
        <ecNumber evidence="1">2.5.1.75</ecNumber>
    </recommendedName>
    <alternativeName>
        <fullName evidence="1">Dimethylallyl diphosphate:tRNA dimethylallyltransferase</fullName>
        <shortName evidence="1">DMAPP:tRNA dimethylallyltransferase</shortName>
        <shortName evidence="1">DMATase</shortName>
    </alternativeName>
    <alternativeName>
        <fullName evidence="1">Isopentenyl-diphosphate:tRNA isopentenyltransferase</fullName>
        <shortName evidence="1">IPP transferase</shortName>
        <shortName evidence="1">IPPT</shortName>
        <shortName evidence="1">IPTase</shortName>
    </alternativeName>
</protein>
<reference key="1">
    <citation type="submission" date="2007-09" db="EMBL/GenBank/DDBJ databases">
        <title>Complete genome sequence of Rickettsia canadensis.</title>
        <authorList>
            <person name="Madan A."/>
            <person name="Fahey J."/>
            <person name="Helton E."/>
            <person name="Ketteman M."/>
            <person name="Madan A."/>
            <person name="Rodrigues S."/>
            <person name="Sanchez A."/>
            <person name="Whiting M."/>
            <person name="Dasch G."/>
            <person name="Eremeeva M."/>
        </authorList>
    </citation>
    <scope>NUCLEOTIDE SEQUENCE [LARGE SCALE GENOMIC DNA]</scope>
    <source>
        <strain>McKiel</strain>
    </source>
</reference>
<name>MIAA_RICCK</name>
<accession>A8EYU8</accession>
<evidence type="ECO:0000255" key="1">
    <source>
        <dbReference type="HAMAP-Rule" id="MF_00185"/>
    </source>
</evidence>
<dbReference type="EC" id="2.5.1.75" evidence="1"/>
<dbReference type="EMBL" id="CP000409">
    <property type="protein sequence ID" value="ABV73531.1"/>
    <property type="molecule type" value="Genomic_DNA"/>
</dbReference>
<dbReference type="RefSeq" id="WP_012148728.1">
    <property type="nucleotide sequence ID" value="NC_009879.1"/>
</dbReference>
<dbReference type="SMR" id="A8EYU8"/>
<dbReference type="STRING" id="293613.A1E_02955"/>
<dbReference type="KEGG" id="rcm:A1E_02955"/>
<dbReference type="eggNOG" id="COG0324">
    <property type="taxonomic scope" value="Bacteria"/>
</dbReference>
<dbReference type="HOGENOM" id="CLU_032616_0_1_5"/>
<dbReference type="Proteomes" id="UP000007056">
    <property type="component" value="Chromosome"/>
</dbReference>
<dbReference type="GO" id="GO:0005524">
    <property type="term" value="F:ATP binding"/>
    <property type="evidence" value="ECO:0007669"/>
    <property type="project" value="UniProtKB-UniRule"/>
</dbReference>
<dbReference type="GO" id="GO:0052381">
    <property type="term" value="F:tRNA dimethylallyltransferase activity"/>
    <property type="evidence" value="ECO:0007669"/>
    <property type="project" value="UniProtKB-UniRule"/>
</dbReference>
<dbReference type="GO" id="GO:0006400">
    <property type="term" value="P:tRNA modification"/>
    <property type="evidence" value="ECO:0007669"/>
    <property type="project" value="TreeGrafter"/>
</dbReference>
<dbReference type="Gene3D" id="1.10.20.140">
    <property type="match status" value="1"/>
</dbReference>
<dbReference type="Gene3D" id="3.40.50.300">
    <property type="entry name" value="P-loop containing nucleotide triphosphate hydrolases"/>
    <property type="match status" value="1"/>
</dbReference>
<dbReference type="HAMAP" id="MF_00185">
    <property type="entry name" value="IPP_trans"/>
    <property type="match status" value="1"/>
</dbReference>
<dbReference type="InterPro" id="IPR039657">
    <property type="entry name" value="Dimethylallyltransferase"/>
</dbReference>
<dbReference type="InterPro" id="IPR018022">
    <property type="entry name" value="IPT"/>
</dbReference>
<dbReference type="InterPro" id="IPR027417">
    <property type="entry name" value="P-loop_NTPase"/>
</dbReference>
<dbReference type="NCBIfam" id="TIGR00174">
    <property type="entry name" value="miaA"/>
    <property type="match status" value="1"/>
</dbReference>
<dbReference type="PANTHER" id="PTHR11088">
    <property type="entry name" value="TRNA DIMETHYLALLYLTRANSFERASE"/>
    <property type="match status" value="1"/>
</dbReference>
<dbReference type="PANTHER" id="PTHR11088:SF60">
    <property type="entry name" value="TRNA DIMETHYLALLYLTRANSFERASE"/>
    <property type="match status" value="1"/>
</dbReference>
<dbReference type="Pfam" id="PF01715">
    <property type="entry name" value="IPPT"/>
    <property type="match status" value="1"/>
</dbReference>
<dbReference type="SUPFAM" id="SSF52540">
    <property type="entry name" value="P-loop containing nucleoside triphosphate hydrolases"/>
    <property type="match status" value="2"/>
</dbReference>